<protein>
    <recommendedName>
        <fullName evidence="1">Bifunctional protein FolD</fullName>
    </recommendedName>
    <domain>
        <recommendedName>
            <fullName evidence="1">Methylenetetrahydrofolate dehydrogenase</fullName>
            <ecNumber evidence="1">1.5.1.5</ecNumber>
        </recommendedName>
    </domain>
    <domain>
        <recommendedName>
            <fullName evidence="1">Methenyltetrahydrofolate cyclohydrolase</fullName>
            <ecNumber evidence="1">3.5.4.9</ecNumber>
        </recommendedName>
    </domain>
</protein>
<sequence>MVQIIDGKALAQKMQAALAKKVESLKAEKGIVPGLVVILVGDNPASQVYVRNKERAALAAGFKSETVRLSDSVCQEELIELIEQYNQDDTIHGILVQLPLPHHINDKSIILAIDPKKDVDGFHPMNTGHLWSGRPNMVPCTPAGIMEMFHDYGIELEGKNAVIVGRSNIVGKPMAQLLLDKNATVTLTHSRTRRLADICRRADILIVAIGQGHFITKEFVKEGAVVIDVGMNRDVNGRLIGDVAFDEVSELASMITPVPGGVGPMTITMLLEQTYQAALRRVSQ</sequence>
<feature type="chain" id="PRO_1000185629" description="Bifunctional protein FolD">
    <location>
        <begin position="1"/>
        <end position="284"/>
    </location>
</feature>
<feature type="binding site" evidence="1">
    <location>
        <begin position="165"/>
        <end position="167"/>
    </location>
    <ligand>
        <name>NADP(+)</name>
        <dbReference type="ChEBI" id="CHEBI:58349"/>
    </ligand>
</feature>
<feature type="binding site" evidence="1">
    <location>
        <position position="190"/>
    </location>
    <ligand>
        <name>NADP(+)</name>
        <dbReference type="ChEBI" id="CHEBI:58349"/>
    </ligand>
</feature>
<gene>
    <name evidence="1" type="primary">folD</name>
    <name type="ordered locus">SEQ_0638</name>
</gene>
<dbReference type="EC" id="1.5.1.5" evidence="1"/>
<dbReference type="EC" id="3.5.4.9" evidence="1"/>
<dbReference type="EMBL" id="FM204883">
    <property type="protein sequence ID" value="CAW92951.1"/>
    <property type="molecule type" value="Genomic_DNA"/>
</dbReference>
<dbReference type="RefSeq" id="WP_012679181.1">
    <property type="nucleotide sequence ID" value="NC_012471.1"/>
</dbReference>
<dbReference type="SMR" id="C0M7V0"/>
<dbReference type="KEGG" id="seu:SEQ_0638"/>
<dbReference type="HOGENOM" id="CLU_034045_2_1_9"/>
<dbReference type="OrthoDB" id="9803580at2"/>
<dbReference type="UniPathway" id="UPA00193"/>
<dbReference type="Proteomes" id="UP000001365">
    <property type="component" value="Chromosome"/>
</dbReference>
<dbReference type="GO" id="GO:0005829">
    <property type="term" value="C:cytosol"/>
    <property type="evidence" value="ECO:0007669"/>
    <property type="project" value="TreeGrafter"/>
</dbReference>
<dbReference type="GO" id="GO:0004477">
    <property type="term" value="F:methenyltetrahydrofolate cyclohydrolase activity"/>
    <property type="evidence" value="ECO:0007669"/>
    <property type="project" value="UniProtKB-UniRule"/>
</dbReference>
<dbReference type="GO" id="GO:0004488">
    <property type="term" value="F:methylenetetrahydrofolate dehydrogenase (NADP+) activity"/>
    <property type="evidence" value="ECO:0007669"/>
    <property type="project" value="UniProtKB-UniRule"/>
</dbReference>
<dbReference type="GO" id="GO:0000105">
    <property type="term" value="P:L-histidine biosynthetic process"/>
    <property type="evidence" value="ECO:0007669"/>
    <property type="project" value="UniProtKB-KW"/>
</dbReference>
<dbReference type="GO" id="GO:0009086">
    <property type="term" value="P:methionine biosynthetic process"/>
    <property type="evidence" value="ECO:0007669"/>
    <property type="project" value="UniProtKB-KW"/>
</dbReference>
<dbReference type="GO" id="GO:0006164">
    <property type="term" value="P:purine nucleotide biosynthetic process"/>
    <property type="evidence" value="ECO:0007669"/>
    <property type="project" value="UniProtKB-KW"/>
</dbReference>
<dbReference type="GO" id="GO:0035999">
    <property type="term" value="P:tetrahydrofolate interconversion"/>
    <property type="evidence" value="ECO:0007669"/>
    <property type="project" value="UniProtKB-UniRule"/>
</dbReference>
<dbReference type="CDD" id="cd01080">
    <property type="entry name" value="NAD_bind_m-THF_DH_Cyclohyd"/>
    <property type="match status" value="1"/>
</dbReference>
<dbReference type="FunFam" id="3.40.50.720:FF:000094">
    <property type="entry name" value="Bifunctional protein FolD"/>
    <property type="match status" value="1"/>
</dbReference>
<dbReference type="FunFam" id="3.40.50.10860:FF:000005">
    <property type="entry name" value="C-1-tetrahydrofolate synthase, cytoplasmic, putative"/>
    <property type="match status" value="1"/>
</dbReference>
<dbReference type="Gene3D" id="3.40.50.10860">
    <property type="entry name" value="Leucine Dehydrogenase, chain A, domain 1"/>
    <property type="match status" value="1"/>
</dbReference>
<dbReference type="Gene3D" id="3.40.50.720">
    <property type="entry name" value="NAD(P)-binding Rossmann-like Domain"/>
    <property type="match status" value="1"/>
</dbReference>
<dbReference type="HAMAP" id="MF_01576">
    <property type="entry name" value="THF_DHG_CYH"/>
    <property type="match status" value="1"/>
</dbReference>
<dbReference type="InterPro" id="IPR046346">
    <property type="entry name" value="Aminoacid_DH-like_N_sf"/>
</dbReference>
<dbReference type="InterPro" id="IPR036291">
    <property type="entry name" value="NAD(P)-bd_dom_sf"/>
</dbReference>
<dbReference type="InterPro" id="IPR000672">
    <property type="entry name" value="THF_DH/CycHdrlase"/>
</dbReference>
<dbReference type="InterPro" id="IPR020630">
    <property type="entry name" value="THF_DH/CycHdrlase_cat_dom"/>
</dbReference>
<dbReference type="InterPro" id="IPR020867">
    <property type="entry name" value="THF_DH/CycHdrlase_CS"/>
</dbReference>
<dbReference type="InterPro" id="IPR020631">
    <property type="entry name" value="THF_DH/CycHdrlase_NAD-bd_dom"/>
</dbReference>
<dbReference type="NCBIfam" id="NF008058">
    <property type="entry name" value="PRK10792.1"/>
    <property type="match status" value="1"/>
</dbReference>
<dbReference type="NCBIfam" id="NF010776">
    <property type="entry name" value="PRK14179.1"/>
    <property type="match status" value="1"/>
</dbReference>
<dbReference type="NCBIfam" id="NF010783">
    <property type="entry name" value="PRK14186.1"/>
    <property type="match status" value="1"/>
</dbReference>
<dbReference type="PANTHER" id="PTHR48099:SF5">
    <property type="entry name" value="C-1-TETRAHYDROFOLATE SYNTHASE, CYTOPLASMIC"/>
    <property type="match status" value="1"/>
</dbReference>
<dbReference type="PANTHER" id="PTHR48099">
    <property type="entry name" value="C-1-TETRAHYDROFOLATE SYNTHASE, CYTOPLASMIC-RELATED"/>
    <property type="match status" value="1"/>
</dbReference>
<dbReference type="Pfam" id="PF00763">
    <property type="entry name" value="THF_DHG_CYH"/>
    <property type="match status" value="1"/>
</dbReference>
<dbReference type="Pfam" id="PF02882">
    <property type="entry name" value="THF_DHG_CYH_C"/>
    <property type="match status" value="1"/>
</dbReference>
<dbReference type="PRINTS" id="PR00085">
    <property type="entry name" value="THFDHDRGNASE"/>
</dbReference>
<dbReference type="SUPFAM" id="SSF53223">
    <property type="entry name" value="Aminoacid dehydrogenase-like, N-terminal domain"/>
    <property type="match status" value="1"/>
</dbReference>
<dbReference type="SUPFAM" id="SSF51735">
    <property type="entry name" value="NAD(P)-binding Rossmann-fold domains"/>
    <property type="match status" value="1"/>
</dbReference>
<dbReference type="PROSITE" id="PS00766">
    <property type="entry name" value="THF_DHG_CYH_1"/>
    <property type="match status" value="1"/>
</dbReference>
<dbReference type="PROSITE" id="PS00767">
    <property type="entry name" value="THF_DHG_CYH_2"/>
    <property type="match status" value="1"/>
</dbReference>
<accession>C0M7V0</accession>
<name>FOLD_STRE4</name>
<comment type="function">
    <text evidence="1">Catalyzes the oxidation of 5,10-methylenetetrahydrofolate to 5,10-methenyltetrahydrofolate and then the hydrolysis of 5,10-methenyltetrahydrofolate to 10-formyltetrahydrofolate.</text>
</comment>
<comment type="catalytic activity">
    <reaction evidence="1">
        <text>(6R)-5,10-methylene-5,6,7,8-tetrahydrofolate + NADP(+) = (6R)-5,10-methenyltetrahydrofolate + NADPH</text>
        <dbReference type="Rhea" id="RHEA:22812"/>
        <dbReference type="ChEBI" id="CHEBI:15636"/>
        <dbReference type="ChEBI" id="CHEBI:57455"/>
        <dbReference type="ChEBI" id="CHEBI:57783"/>
        <dbReference type="ChEBI" id="CHEBI:58349"/>
        <dbReference type="EC" id="1.5.1.5"/>
    </reaction>
</comment>
<comment type="catalytic activity">
    <reaction evidence="1">
        <text>(6R)-5,10-methenyltetrahydrofolate + H2O = (6R)-10-formyltetrahydrofolate + H(+)</text>
        <dbReference type="Rhea" id="RHEA:23700"/>
        <dbReference type="ChEBI" id="CHEBI:15377"/>
        <dbReference type="ChEBI" id="CHEBI:15378"/>
        <dbReference type="ChEBI" id="CHEBI:57455"/>
        <dbReference type="ChEBI" id="CHEBI:195366"/>
        <dbReference type="EC" id="3.5.4.9"/>
    </reaction>
</comment>
<comment type="pathway">
    <text evidence="1">One-carbon metabolism; tetrahydrofolate interconversion.</text>
</comment>
<comment type="subunit">
    <text evidence="1">Homodimer.</text>
</comment>
<comment type="similarity">
    <text evidence="1">Belongs to the tetrahydrofolate dehydrogenase/cyclohydrolase family.</text>
</comment>
<evidence type="ECO:0000255" key="1">
    <source>
        <dbReference type="HAMAP-Rule" id="MF_01576"/>
    </source>
</evidence>
<reference key="1">
    <citation type="journal article" date="2009" name="PLoS Pathog.">
        <title>Genomic evidence for the evolution of Streptococcus equi: host restriction, increased virulence, and genetic exchange with human pathogens.</title>
        <authorList>
            <person name="Holden M.T.G."/>
            <person name="Heather Z."/>
            <person name="Paillot R."/>
            <person name="Steward K.F."/>
            <person name="Webb K."/>
            <person name="Ainslie F."/>
            <person name="Jourdan T."/>
            <person name="Bason N.C."/>
            <person name="Holroyd N.E."/>
            <person name="Mungall K."/>
            <person name="Quail M.A."/>
            <person name="Sanders M."/>
            <person name="Simmonds M."/>
            <person name="Willey D."/>
            <person name="Brooks K."/>
            <person name="Aanensen D.M."/>
            <person name="Spratt B.G."/>
            <person name="Jolley K.A."/>
            <person name="Maiden M.C.J."/>
            <person name="Kehoe M."/>
            <person name="Chanter N."/>
            <person name="Bentley S.D."/>
            <person name="Robinson C."/>
            <person name="Maskell D.J."/>
            <person name="Parkhill J."/>
            <person name="Waller A.S."/>
        </authorList>
    </citation>
    <scope>NUCLEOTIDE SEQUENCE [LARGE SCALE GENOMIC DNA]</scope>
    <source>
        <strain>4047</strain>
    </source>
</reference>
<keyword id="KW-0028">Amino-acid biosynthesis</keyword>
<keyword id="KW-0368">Histidine biosynthesis</keyword>
<keyword id="KW-0378">Hydrolase</keyword>
<keyword id="KW-0486">Methionine biosynthesis</keyword>
<keyword id="KW-0511">Multifunctional enzyme</keyword>
<keyword id="KW-0521">NADP</keyword>
<keyword id="KW-0554">One-carbon metabolism</keyword>
<keyword id="KW-0560">Oxidoreductase</keyword>
<keyword id="KW-0658">Purine biosynthesis</keyword>
<organism>
    <name type="scientific">Streptococcus equi subsp. equi (strain 4047)</name>
    <dbReference type="NCBI Taxonomy" id="553482"/>
    <lineage>
        <taxon>Bacteria</taxon>
        <taxon>Bacillati</taxon>
        <taxon>Bacillota</taxon>
        <taxon>Bacilli</taxon>
        <taxon>Lactobacillales</taxon>
        <taxon>Streptococcaceae</taxon>
        <taxon>Streptococcus</taxon>
    </lineage>
</organism>
<proteinExistence type="inferred from homology"/>